<proteinExistence type="inferred from homology"/>
<organism>
    <name type="scientific">Francisella tularensis subsp. holarctica (strain FTNF002-00 / FTA)</name>
    <dbReference type="NCBI Taxonomy" id="458234"/>
    <lineage>
        <taxon>Bacteria</taxon>
        <taxon>Pseudomonadati</taxon>
        <taxon>Pseudomonadota</taxon>
        <taxon>Gammaproteobacteria</taxon>
        <taxon>Thiotrichales</taxon>
        <taxon>Francisellaceae</taxon>
        <taxon>Francisella</taxon>
    </lineage>
</organism>
<evidence type="ECO:0000255" key="1">
    <source>
        <dbReference type="HAMAP-Rule" id="MF_00600"/>
    </source>
</evidence>
<evidence type="ECO:0000305" key="2"/>
<dbReference type="EC" id="5.6.1.7" evidence="1"/>
<dbReference type="EMBL" id="CP000803">
    <property type="protein sequence ID" value="ABU62291.2"/>
    <property type="status" value="ALT_INIT"/>
    <property type="molecule type" value="Genomic_DNA"/>
</dbReference>
<dbReference type="RefSeq" id="WP_003017167.1">
    <property type="nucleotide sequence ID" value="NC_009749.1"/>
</dbReference>
<dbReference type="SMR" id="A7NE88"/>
<dbReference type="KEGG" id="fta:FTA_1816"/>
<dbReference type="HOGENOM" id="CLU_016503_3_0_6"/>
<dbReference type="GO" id="GO:0005737">
    <property type="term" value="C:cytoplasm"/>
    <property type="evidence" value="ECO:0007669"/>
    <property type="project" value="UniProtKB-SubCell"/>
</dbReference>
<dbReference type="GO" id="GO:0005524">
    <property type="term" value="F:ATP binding"/>
    <property type="evidence" value="ECO:0007669"/>
    <property type="project" value="UniProtKB-UniRule"/>
</dbReference>
<dbReference type="GO" id="GO:0140662">
    <property type="term" value="F:ATP-dependent protein folding chaperone"/>
    <property type="evidence" value="ECO:0007669"/>
    <property type="project" value="InterPro"/>
</dbReference>
<dbReference type="GO" id="GO:0016853">
    <property type="term" value="F:isomerase activity"/>
    <property type="evidence" value="ECO:0007669"/>
    <property type="project" value="UniProtKB-KW"/>
</dbReference>
<dbReference type="GO" id="GO:0051082">
    <property type="term" value="F:unfolded protein binding"/>
    <property type="evidence" value="ECO:0007669"/>
    <property type="project" value="UniProtKB-UniRule"/>
</dbReference>
<dbReference type="GO" id="GO:0042026">
    <property type="term" value="P:protein refolding"/>
    <property type="evidence" value="ECO:0007669"/>
    <property type="project" value="UniProtKB-UniRule"/>
</dbReference>
<dbReference type="CDD" id="cd03344">
    <property type="entry name" value="GroEL"/>
    <property type="match status" value="1"/>
</dbReference>
<dbReference type="FunFam" id="1.10.560.10:FF:000001">
    <property type="entry name" value="60 kDa chaperonin"/>
    <property type="match status" value="1"/>
</dbReference>
<dbReference type="FunFam" id="3.50.7.10:FF:000001">
    <property type="entry name" value="60 kDa chaperonin"/>
    <property type="match status" value="1"/>
</dbReference>
<dbReference type="Gene3D" id="3.50.7.10">
    <property type="entry name" value="GroEL"/>
    <property type="match status" value="1"/>
</dbReference>
<dbReference type="Gene3D" id="1.10.560.10">
    <property type="entry name" value="GroEL-like equatorial domain"/>
    <property type="match status" value="1"/>
</dbReference>
<dbReference type="Gene3D" id="3.30.260.10">
    <property type="entry name" value="TCP-1-like chaperonin intermediate domain"/>
    <property type="match status" value="1"/>
</dbReference>
<dbReference type="HAMAP" id="MF_00600">
    <property type="entry name" value="CH60"/>
    <property type="match status" value="1"/>
</dbReference>
<dbReference type="InterPro" id="IPR018370">
    <property type="entry name" value="Chaperonin_Cpn60_CS"/>
</dbReference>
<dbReference type="InterPro" id="IPR001844">
    <property type="entry name" value="Cpn60/GroEL"/>
</dbReference>
<dbReference type="InterPro" id="IPR002423">
    <property type="entry name" value="Cpn60/GroEL/TCP-1"/>
</dbReference>
<dbReference type="InterPro" id="IPR027409">
    <property type="entry name" value="GroEL-like_apical_dom_sf"/>
</dbReference>
<dbReference type="InterPro" id="IPR027413">
    <property type="entry name" value="GROEL-like_equatorial_sf"/>
</dbReference>
<dbReference type="InterPro" id="IPR027410">
    <property type="entry name" value="TCP-1-like_intermed_sf"/>
</dbReference>
<dbReference type="NCBIfam" id="TIGR02348">
    <property type="entry name" value="GroEL"/>
    <property type="match status" value="1"/>
</dbReference>
<dbReference type="NCBIfam" id="NF000592">
    <property type="entry name" value="PRK00013.1"/>
    <property type="match status" value="1"/>
</dbReference>
<dbReference type="NCBIfam" id="NF009487">
    <property type="entry name" value="PRK12849.1"/>
    <property type="match status" value="1"/>
</dbReference>
<dbReference type="NCBIfam" id="NF009488">
    <property type="entry name" value="PRK12850.1"/>
    <property type="match status" value="1"/>
</dbReference>
<dbReference type="NCBIfam" id="NF009489">
    <property type="entry name" value="PRK12851.1"/>
    <property type="match status" value="1"/>
</dbReference>
<dbReference type="PANTHER" id="PTHR45633">
    <property type="entry name" value="60 KDA HEAT SHOCK PROTEIN, MITOCHONDRIAL"/>
    <property type="match status" value="1"/>
</dbReference>
<dbReference type="Pfam" id="PF00118">
    <property type="entry name" value="Cpn60_TCP1"/>
    <property type="match status" value="1"/>
</dbReference>
<dbReference type="PRINTS" id="PR00298">
    <property type="entry name" value="CHAPERONIN60"/>
</dbReference>
<dbReference type="SUPFAM" id="SSF52029">
    <property type="entry name" value="GroEL apical domain-like"/>
    <property type="match status" value="1"/>
</dbReference>
<dbReference type="SUPFAM" id="SSF48592">
    <property type="entry name" value="GroEL equatorial domain-like"/>
    <property type="match status" value="1"/>
</dbReference>
<dbReference type="SUPFAM" id="SSF54849">
    <property type="entry name" value="GroEL-intermediate domain like"/>
    <property type="match status" value="1"/>
</dbReference>
<dbReference type="PROSITE" id="PS00296">
    <property type="entry name" value="CHAPERONINS_CPN60"/>
    <property type="match status" value="1"/>
</dbReference>
<gene>
    <name evidence="1" type="primary">groEL</name>
    <name evidence="1" type="synonym">groL</name>
    <name type="ordered locus">FTA_1816</name>
</gene>
<name>CH60_FRATF</name>
<protein>
    <recommendedName>
        <fullName evidence="1">Chaperonin GroEL</fullName>
        <ecNumber evidence="1">5.6.1.7</ecNumber>
    </recommendedName>
    <alternativeName>
        <fullName evidence="1">60 kDa chaperonin</fullName>
    </alternativeName>
    <alternativeName>
        <fullName evidence="1">Chaperonin-60</fullName>
        <shortName evidence="1">Cpn60</shortName>
    </alternativeName>
</protein>
<reference key="1">
    <citation type="journal article" date="2009" name="PLoS ONE">
        <title>Complete genome sequence of Francisella tularensis subspecies holarctica FTNF002-00.</title>
        <authorList>
            <person name="Barabote R.D."/>
            <person name="Xie G."/>
            <person name="Brettin T.S."/>
            <person name="Hinrichs S.H."/>
            <person name="Fey P.D."/>
            <person name="Jay J.J."/>
            <person name="Engle J.L."/>
            <person name="Godbole S.D."/>
            <person name="Noronha J.M."/>
            <person name="Scheuermann R.H."/>
            <person name="Zhou L.W."/>
            <person name="Lion C."/>
            <person name="Dempsey M.P."/>
        </authorList>
    </citation>
    <scope>NUCLEOTIDE SEQUENCE [LARGE SCALE GENOMIC DNA]</scope>
    <source>
        <strain>FTNF002-00 / FTA</strain>
    </source>
</reference>
<keyword id="KW-0067">ATP-binding</keyword>
<keyword id="KW-0143">Chaperone</keyword>
<keyword id="KW-0963">Cytoplasm</keyword>
<keyword id="KW-0413">Isomerase</keyword>
<keyword id="KW-0547">Nucleotide-binding</keyword>
<feature type="chain" id="PRO_1000025781" description="Chaperonin GroEL">
    <location>
        <begin position="1"/>
        <end position="544"/>
    </location>
</feature>
<feature type="binding site" evidence="1">
    <location>
        <begin position="30"/>
        <end position="33"/>
    </location>
    <ligand>
        <name>ATP</name>
        <dbReference type="ChEBI" id="CHEBI:30616"/>
    </ligand>
</feature>
<feature type="binding site" evidence="1">
    <location>
        <position position="51"/>
    </location>
    <ligand>
        <name>ATP</name>
        <dbReference type="ChEBI" id="CHEBI:30616"/>
    </ligand>
</feature>
<feature type="binding site" evidence="1">
    <location>
        <begin position="87"/>
        <end position="91"/>
    </location>
    <ligand>
        <name>ATP</name>
        <dbReference type="ChEBI" id="CHEBI:30616"/>
    </ligand>
</feature>
<feature type="binding site" evidence="1">
    <location>
        <position position="415"/>
    </location>
    <ligand>
        <name>ATP</name>
        <dbReference type="ChEBI" id="CHEBI:30616"/>
    </ligand>
</feature>
<feature type="binding site" evidence="1">
    <location>
        <begin position="479"/>
        <end position="481"/>
    </location>
    <ligand>
        <name>ATP</name>
        <dbReference type="ChEBI" id="CHEBI:30616"/>
    </ligand>
</feature>
<feature type="binding site" evidence="1">
    <location>
        <position position="495"/>
    </location>
    <ligand>
        <name>ATP</name>
        <dbReference type="ChEBI" id="CHEBI:30616"/>
    </ligand>
</feature>
<sequence>MAAKQVLFSDEARAKMLDGVNTLANAVKVTLGPKGRNVVLDKSFGAPTITKDGVSVAKEIELEDKFENMGAQIVKEVASKTADVAGDGTTTATVLAQALLTEGLKAVTAGMNPMDLKRGIDKATARLVEELKALSKPCSDPKSIEQVGTISANSDATVGKLIADAMAKVGKEGVITVEEGKGFEDELDVVEGMQFDRGYLSPYFATNQENMTTDLENPYILIVDKKISNIRDLLPILEGVSKSGRALLIIAEDVESEALATLVVNNMRGVVKVCAVKAPGFGDRRKAMLEDIATLTGATFVSEDLSMKLEETNMEHLGTASRVQVTKDNTTIIDGAGEKEAIAKRINVIKANIAEANSDYDREKLQERLAKLSGGVAVIKVGAVTEAEMKEKKDRVDDALHATRAAVEEGIVAGGGVALIRAQKALDGLTGENDDQNHGIALLRKAIEAPLRQIVSNAGGESSVVVNQVKANQGNYGYNAANDTYGDMVEMGILDPTKVTRSALQHAASIAGLMITTEAMIGEIKEAAPAMPMGGGMGGMPGMM</sequence>
<accession>A7NE88</accession>
<comment type="function">
    <text evidence="1">Together with its co-chaperonin GroES, plays an essential role in assisting protein folding. The GroEL-GroES system forms a nano-cage that allows encapsulation of the non-native substrate proteins and provides a physical environment optimized to promote and accelerate protein folding.</text>
</comment>
<comment type="catalytic activity">
    <reaction evidence="1">
        <text>ATP + H2O + a folded polypeptide = ADP + phosphate + an unfolded polypeptide.</text>
        <dbReference type="EC" id="5.6.1.7"/>
    </reaction>
</comment>
<comment type="subunit">
    <text evidence="1">Forms a cylinder of 14 subunits composed of two heptameric rings stacked back-to-back. Interacts with the co-chaperonin GroES.</text>
</comment>
<comment type="subcellular location">
    <subcellularLocation>
        <location evidence="1">Cytoplasm</location>
    </subcellularLocation>
</comment>
<comment type="similarity">
    <text evidence="1">Belongs to the chaperonin (HSP60) family.</text>
</comment>
<comment type="sequence caution" evidence="2">
    <conflict type="erroneous initiation">
        <sequence resource="EMBL-CDS" id="ABU62291"/>
    </conflict>
</comment>